<evidence type="ECO:0000250" key="1"/>
<evidence type="ECO:0000255" key="2"/>
<evidence type="ECO:0000303" key="3">
    <source>
    </source>
</evidence>
<evidence type="ECO:0000305" key="4"/>
<evidence type="ECO:0000305" key="5">
    <source>
    </source>
</evidence>
<feature type="signal peptide" evidence="2">
    <location>
        <begin position="1"/>
        <end position="22"/>
    </location>
</feature>
<feature type="propeptide" id="PRO_0000430898" evidence="1">
    <location>
        <begin position="23"/>
        <end position="35"/>
    </location>
</feature>
<feature type="chain" id="PRO_0000430899" description="Omega/kappa-hexatoxin-Hv1g">
    <location>
        <begin position="38"/>
        <end position="76"/>
    </location>
</feature>
<feature type="disulfide bond" evidence="1">
    <location>
        <begin position="40"/>
        <end position="55"/>
    </location>
</feature>
<feature type="disulfide bond" evidence="1">
    <location>
        <begin position="47"/>
        <end position="60"/>
    </location>
</feature>
<feature type="disulfide bond" evidence="1">
    <location>
        <begin position="54"/>
        <end position="74"/>
    </location>
</feature>
<dbReference type="EMBL" id="HG001298">
    <property type="protein sequence ID" value="CDF44159.1"/>
    <property type="molecule type" value="mRNA"/>
</dbReference>
<dbReference type="EMBL" id="HG001299">
    <property type="protein sequence ID" value="CDF44160.1"/>
    <property type="molecule type" value="mRNA"/>
</dbReference>
<dbReference type="EMBL" id="HG001300">
    <property type="protein sequence ID" value="CDF44161.1"/>
    <property type="molecule type" value="mRNA"/>
</dbReference>
<dbReference type="EMBL" id="HG001301">
    <property type="protein sequence ID" value="CDF44162.1"/>
    <property type="molecule type" value="mRNA"/>
</dbReference>
<dbReference type="SMR" id="S0F207"/>
<dbReference type="GO" id="GO:0005576">
    <property type="term" value="C:extracellular region"/>
    <property type="evidence" value="ECO:0007669"/>
    <property type="project" value="UniProtKB-SubCell"/>
</dbReference>
<dbReference type="GO" id="GO:0099106">
    <property type="term" value="F:ion channel regulator activity"/>
    <property type="evidence" value="ECO:0007669"/>
    <property type="project" value="UniProtKB-KW"/>
</dbReference>
<dbReference type="GO" id="GO:0090729">
    <property type="term" value="F:toxin activity"/>
    <property type="evidence" value="ECO:0007669"/>
    <property type="project" value="UniProtKB-KW"/>
</dbReference>
<protein>
    <recommendedName>
        <fullName evidence="3">Omega/kappa-hexatoxin-Hv1g</fullName>
    </recommendedName>
</protein>
<proteinExistence type="inferred from homology"/>
<name>TOK1G_HADVE</name>
<accession>S0F207</accession>
<organism>
    <name type="scientific">Hadronyche versuta</name>
    <name type="common">Blue mountains funnel-web spider</name>
    <name type="synonym">Atrax versutus</name>
    <dbReference type="NCBI Taxonomy" id="6904"/>
    <lineage>
        <taxon>Eukaryota</taxon>
        <taxon>Metazoa</taxon>
        <taxon>Ecdysozoa</taxon>
        <taxon>Arthropoda</taxon>
        <taxon>Chelicerata</taxon>
        <taxon>Arachnida</taxon>
        <taxon>Araneae</taxon>
        <taxon>Mygalomorphae</taxon>
        <taxon>Hexathelidae</taxon>
        <taxon>Hadronyche</taxon>
    </lineage>
</organism>
<keyword id="KW-0165">Cleavage on pair of basic residues</keyword>
<keyword id="KW-1015">Disulfide bond</keyword>
<keyword id="KW-0872">Ion channel impairing toxin</keyword>
<keyword id="KW-0960">Knottin</keyword>
<keyword id="KW-0964">Secreted</keyword>
<keyword id="KW-0732">Signal</keyword>
<keyword id="KW-0800">Toxin</keyword>
<reference key="1">
    <citation type="journal article" date="2014" name="BMC Genomics">
        <title>Diversification of a single ancestral gene into a successful toxin superfamily in highly venomous Australian funnel-web spiders.</title>
        <authorList>
            <person name="Pineda S.S."/>
            <person name="Sollod B.L."/>
            <person name="Wilson D."/>
            <person name="Darling A."/>
            <person name="Sunagar K."/>
            <person name="Undheim E.A."/>
            <person name="Kely L."/>
            <person name="Antunes A."/>
            <person name="Fry B.G."/>
            <person name="King G.F."/>
        </authorList>
    </citation>
    <scope>NUCLEOTIDE SEQUENCE [MRNA]</scope>
    <source>
        <tissue>Venom gland</tissue>
    </source>
</reference>
<sequence length="76" mass="8373">MNTATGFIVLLVLATVLGGIEAGESHMRKDAMGRVRRQYCVPVDQPCSLNTQPCCDDATCTQELNENDNTVYYCRA</sequence>
<comment type="function">
    <text evidence="4">Toxin that may inhibit ion channels.</text>
</comment>
<comment type="subcellular location">
    <subcellularLocation>
        <location evidence="5">Secreted</location>
    </subcellularLocation>
</comment>
<comment type="tissue specificity">
    <text evidence="5">Expressed by the venom gland.</text>
</comment>
<comment type="domain">
    <text evidence="1">The presence of a 'disulfide through disulfide knot' structurally defines this protein as a knottin.</text>
</comment>
<comment type="miscellaneous">
    <text evidence="5">Several paralogs that code for the same precursor are shown in this entry, whereas other paralogs that code for the same mature protein are shown in AC S0F214, AC S0F208, and AC S0F1N5.</text>
</comment>
<comment type="similarity">
    <text evidence="4">Belongs to the neurotoxin 08 (Shiva) family. 02 (omega/kappa toxin) subfamily.</text>
</comment>